<dbReference type="EC" id="4.2.1.11" evidence="1"/>
<dbReference type="EMBL" id="CU928164">
    <property type="protein sequence ID" value="CAR19317.1"/>
    <property type="molecule type" value="Genomic_DNA"/>
</dbReference>
<dbReference type="RefSeq" id="WP_000036723.1">
    <property type="nucleotide sequence ID" value="NC_011750.1"/>
</dbReference>
<dbReference type="RefSeq" id="YP_002409124.1">
    <property type="nucleotide sequence ID" value="NC_011750.1"/>
</dbReference>
<dbReference type="SMR" id="B7NV69"/>
<dbReference type="STRING" id="585057.ECIAI39_3198"/>
<dbReference type="GeneID" id="93779219"/>
<dbReference type="KEGG" id="ect:ECIAI39_3198"/>
<dbReference type="PATRIC" id="fig|585057.6.peg.3321"/>
<dbReference type="HOGENOM" id="CLU_031223_2_1_6"/>
<dbReference type="UniPathway" id="UPA00109">
    <property type="reaction ID" value="UER00187"/>
</dbReference>
<dbReference type="Proteomes" id="UP000000749">
    <property type="component" value="Chromosome"/>
</dbReference>
<dbReference type="GO" id="GO:0009986">
    <property type="term" value="C:cell surface"/>
    <property type="evidence" value="ECO:0007669"/>
    <property type="project" value="UniProtKB-SubCell"/>
</dbReference>
<dbReference type="GO" id="GO:0005576">
    <property type="term" value="C:extracellular region"/>
    <property type="evidence" value="ECO:0007669"/>
    <property type="project" value="UniProtKB-SubCell"/>
</dbReference>
<dbReference type="GO" id="GO:0000015">
    <property type="term" value="C:phosphopyruvate hydratase complex"/>
    <property type="evidence" value="ECO:0007669"/>
    <property type="project" value="InterPro"/>
</dbReference>
<dbReference type="GO" id="GO:0000287">
    <property type="term" value="F:magnesium ion binding"/>
    <property type="evidence" value="ECO:0007669"/>
    <property type="project" value="UniProtKB-UniRule"/>
</dbReference>
<dbReference type="GO" id="GO:0004634">
    <property type="term" value="F:phosphopyruvate hydratase activity"/>
    <property type="evidence" value="ECO:0007669"/>
    <property type="project" value="UniProtKB-UniRule"/>
</dbReference>
<dbReference type="GO" id="GO:0006096">
    <property type="term" value="P:glycolytic process"/>
    <property type="evidence" value="ECO:0007669"/>
    <property type="project" value="UniProtKB-UniRule"/>
</dbReference>
<dbReference type="CDD" id="cd03313">
    <property type="entry name" value="enolase"/>
    <property type="match status" value="1"/>
</dbReference>
<dbReference type="FunFam" id="3.20.20.120:FF:000001">
    <property type="entry name" value="Enolase"/>
    <property type="match status" value="1"/>
</dbReference>
<dbReference type="FunFam" id="3.30.390.10:FF:000001">
    <property type="entry name" value="Enolase"/>
    <property type="match status" value="1"/>
</dbReference>
<dbReference type="Gene3D" id="3.20.20.120">
    <property type="entry name" value="Enolase-like C-terminal domain"/>
    <property type="match status" value="1"/>
</dbReference>
<dbReference type="Gene3D" id="3.30.390.10">
    <property type="entry name" value="Enolase-like, N-terminal domain"/>
    <property type="match status" value="1"/>
</dbReference>
<dbReference type="HAMAP" id="MF_00318">
    <property type="entry name" value="Enolase"/>
    <property type="match status" value="1"/>
</dbReference>
<dbReference type="InterPro" id="IPR000941">
    <property type="entry name" value="Enolase"/>
</dbReference>
<dbReference type="InterPro" id="IPR036849">
    <property type="entry name" value="Enolase-like_C_sf"/>
</dbReference>
<dbReference type="InterPro" id="IPR029017">
    <property type="entry name" value="Enolase-like_N"/>
</dbReference>
<dbReference type="InterPro" id="IPR020810">
    <property type="entry name" value="Enolase_C"/>
</dbReference>
<dbReference type="InterPro" id="IPR020809">
    <property type="entry name" value="Enolase_CS"/>
</dbReference>
<dbReference type="InterPro" id="IPR020811">
    <property type="entry name" value="Enolase_N"/>
</dbReference>
<dbReference type="NCBIfam" id="TIGR01060">
    <property type="entry name" value="eno"/>
    <property type="match status" value="1"/>
</dbReference>
<dbReference type="PANTHER" id="PTHR11902">
    <property type="entry name" value="ENOLASE"/>
    <property type="match status" value="1"/>
</dbReference>
<dbReference type="PANTHER" id="PTHR11902:SF1">
    <property type="entry name" value="ENOLASE"/>
    <property type="match status" value="1"/>
</dbReference>
<dbReference type="Pfam" id="PF00113">
    <property type="entry name" value="Enolase_C"/>
    <property type="match status" value="1"/>
</dbReference>
<dbReference type="Pfam" id="PF03952">
    <property type="entry name" value="Enolase_N"/>
    <property type="match status" value="1"/>
</dbReference>
<dbReference type="PIRSF" id="PIRSF001400">
    <property type="entry name" value="Enolase"/>
    <property type="match status" value="1"/>
</dbReference>
<dbReference type="PRINTS" id="PR00148">
    <property type="entry name" value="ENOLASE"/>
</dbReference>
<dbReference type="SFLD" id="SFLDS00001">
    <property type="entry name" value="Enolase"/>
    <property type="match status" value="1"/>
</dbReference>
<dbReference type="SFLD" id="SFLDF00002">
    <property type="entry name" value="enolase"/>
    <property type="match status" value="1"/>
</dbReference>
<dbReference type="SMART" id="SM01192">
    <property type="entry name" value="Enolase_C"/>
    <property type="match status" value="1"/>
</dbReference>
<dbReference type="SMART" id="SM01193">
    <property type="entry name" value="Enolase_N"/>
    <property type="match status" value="1"/>
</dbReference>
<dbReference type="SUPFAM" id="SSF51604">
    <property type="entry name" value="Enolase C-terminal domain-like"/>
    <property type="match status" value="1"/>
</dbReference>
<dbReference type="SUPFAM" id="SSF54826">
    <property type="entry name" value="Enolase N-terminal domain-like"/>
    <property type="match status" value="1"/>
</dbReference>
<dbReference type="PROSITE" id="PS00164">
    <property type="entry name" value="ENOLASE"/>
    <property type="match status" value="1"/>
</dbReference>
<protein>
    <recommendedName>
        <fullName evidence="1">Enolase</fullName>
        <ecNumber evidence="1">4.2.1.11</ecNumber>
    </recommendedName>
    <alternativeName>
        <fullName evidence="1">2-phospho-D-glycerate hydro-lyase</fullName>
    </alternativeName>
    <alternativeName>
        <fullName evidence="1">2-phosphoglycerate dehydratase</fullName>
    </alternativeName>
</protein>
<proteinExistence type="inferred from homology"/>
<accession>B7NV69</accession>
<keyword id="KW-0963">Cytoplasm</keyword>
<keyword id="KW-0324">Glycolysis</keyword>
<keyword id="KW-0456">Lyase</keyword>
<keyword id="KW-0460">Magnesium</keyword>
<keyword id="KW-0479">Metal-binding</keyword>
<keyword id="KW-0964">Secreted</keyword>
<name>ENO_ECO7I</name>
<comment type="function">
    <text evidence="1">Catalyzes the reversible conversion of 2-phosphoglycerate (2-PG) into phosphoenolpyruvate (PEP). It is essential for the degradation of carbohydrates via glycolysis.</text>
</comment>
<comment type="catalytic activity">
    <reaction evidence="1">
        <text>(2R)-2-phosphoglycerate = phosphoenolpyruvate + H2O</text>
        <dbReference type="Rhea" id="RHEA:10164"/>
        <dbReference type="ChEBI" id="CHEBI:15377"/>
        <dbReference type="ChEBI" id="CHEBI:58289"/>
        <dbReference type="ChEBI" id="CHEBI:58702"/>
        <dbReference type="EC" id="4.2.1.11"/>
    </reaction>
</comment>
<comment type="cofactor">
    <cofactor evidence="1">
        <name>Mg(2+)</name>
        <dbReference type="ChEBI" id="CHEBI:18420"/>
    </cofactor>
    <text evidence="1">Binds a second Mg(2+) ion via substrate during catalysis.</text>
</comment>
<comment type="pathway">
    <text evidence="1">Carbohydrate degradation; glycolysis; pyruvate from D-glyceraldehyde 3-phosphate: step 4/5.</text>
</comment>
<comment type="subunit">
    <text evidence="1">Component of the RNA degradosome, a multiprotein complex involved in RNA processing and mRNA degradation.</text>
</comment>
<comment type="subcellular location">
    <subcellularLocation>
        <location evidence="1">Cytoplasm</location>
    </subcellularLocation>
    <subcellularLocation>
        <location evidence="1">Secreted</location>
    </subcellularLocation>
    <subcellularLocation>
        <location evidence="1">Cell surface</location>
    </subcellularLocation>
    <text evidence="1">Fractions of enolase are present in both the cytoplasm and on the cell surface.</text>
</comment>
<comment type="similarity">
    <text evidence="1">Belongs to the enolase family.</text>
</comment>
<feature type="chain" id="PRO_1000119573" description="Enolase">
    <location>
        <begin position="1"/>
        <end position="432"/>
    </location>
</feature>
<feature type="active site" description="Proton donor" evidence="1">
    <location>
        <position position="209"/>
    </location>
</feature>
<feature type="active site" description="Proton acceptor" evidence="1">
    <location>
        <position position="342"/>
    </location>
</feature>
<feature type="binding site" evidence="1">
    <location>
        <position position="167"/>
    </location>
    <ligand>
        <name>(2R)-2-phosphoglycerate</name>
        <dbReference type="ChEBI" id="CHEBI:58289"/>
    </ligand>
</feature>
<feature type="binding site" evidence="1">
    <location>
        <position position="246"/>
    </location>
    <ligand>
        <name>Mg(2+)</name>
        <dbReference type="ChEBI" id="CHEBI:18420"/>
    </ligand>
</feature>
<feature type="binding site" evidence="1">
    <location>
        <position position="290"/>
    </location>
    <ligand>
        <name>Mg(2+)</name>
        <dbReference type="ChEBI" id="CHEBI:18420"/>
    </ligand>
</feature>
<feature type="binding site" evidence="1">
    <location>
        <position position="317"/>
    </location>
    <ligand>
        <name>Mg(2+)</name>
        <dbReference type="ChEBI" id="CHEBI:18420"/>
    </ligand>
</feature>
<feature type="binding site" evidence="1">
    <location>
        <position position="342"/>
    </location>
    <ligand>
        <name>(2R)-2-phosphoglycerate</name>
        <dbReference type="ChEBI" id="CHEBI:58289"/>
    </ligand>
</feature>
<feature type="binding site" evidence="1">
    <location>
        <position position="371"/>
    </location>
    <ligand>
        <name>(2R)-2-phosphoglycerate</name>
        <dbReference type="ChEBI" id="CHEBI:58289"/>
    </ligand>
</feature>
<feature type="binding site" evidence="1">
    <location>
        <position position="372"/>
    </location>
    <ligand>
        <name>(2R)-2-phosphoglycerate</name>
        <dbReference type="ChEBI" id="CHEBI:58289"/>
    </ligand>
</feature>
<feature type="binding site" evidence="1">
    <location>
        <position position="393"/>
    </location>
    <ligand>
        <name>(2R)-2-phosphoglycerate</name>
        <dbReference type="ChEBI" id="CHEBI:58289"/>
    </ligand>
</feature>
<reference key="1">
    <citation type="journal article" date="2009" name="PLoS Genet.">
        <title>Organised genome dynamics in the Escherichia coli species results in highly diverse adaptive paths.</title>
        <authorList>
            <person name="Touchon M."/>
            <person name="Hoede C."/>
            <person name="Tenaillon O."/>
            <person name="Barbe V."/>
            <person name="Baeriswyl S."/>
            <person name="Bidet P."/>
            <person name="Bingen E."/>
            <person name="Bonacorsi S."/>
            <person name="Bouchier C."/>
            <person name="Bouvet O."/>
            <person name="Calteau A."/>
            <person name="Chiapello H."/>
            <person name="Clermont O."/>
            <person name="Cruveiller S."/>
            <person name="Danchin A."/>
            <person name="Diard M."/>
            <person name="Dossat C."/>
            <person name="Karoui M.E."/>
            <person name="Frapy E."/>
            <person name="Garry L."/>
            <person name="Ghigo J.M."/>
            <person name="Gilles A.M."/>
            <person name="Johnson J."/>
            <person name="Le Bouguenec C."/>
            <person name="Lescat M."/>
            <person name="Mangenot S."/>
            <person name="Martinez-Jehanne V."/>
            <person name="Matic I."/>
            <person name="Nassif X."/>
            <person name="Oztas S."/>
            <person name="Petit M.A."/>
            <person name="Pichon C."/>
            <person name="Rouy Z."/>
            <person name="Ruf C.S."/>
            <person name="Schneider D."/>
            <person name="Tourret J."/>
            <person name="Vacherie B."/>
            <person name="Vallenet D."/>
            <person name="Medigue C."/>
            <person name="Rocha E.P.C."/>
            <person name="Denamur E."/>
        </authorList>
    </citation>
    <scope>NUCLEOTIDE SEQUENCE [LARGE SCALE GENOMIC DNA]</scope>
    <source>
        <strain>IAI39 / ExPEC</strain>
    </source>
</reference>
<sequence length="432" mass="45655">MSKIVKIIGREIIDSRGNPTVEAEVHLEGGFVGMAAAPSGASTGSREALELRDGDKSRFLGKGVTKAVAAVNGPIAQALIGKDAKDQAGIDKIMIDLDGTENKSKFGANAILAVSLANAKAAAAAKGMPLYEHIAELNGTPGKYSMPVPMMNIINGGEHADNNVDIQEFMIQPVGAKTVKEAIRMGSEVFHHLAKVLKAKGMNTAVGDEGGYAPNLGSNAEALAVIAEAVKAAGYELGKDITLAMDCAASEFYKDGKYVLAGEGNKAFTSEEFTHFLEELTKQYPIVSIEDGLDESDWDGFAYQTKVLGDKIQLVGDDLFVTNTKILKEGIEKGIANSILIKFNQIGSLTETLAAIKMAKDAGYTAVISHRSGETEDATIADLAVGTAAGQIKTGSMSRSDRVAKYNQLIRIEEALGEKAPYNGRKEIKGQA</sequence>
<gene>
    <name evidence="1" type="primary">eno</name>
    <name type="ordered locus">ECIAI39_3198</name>
</gene>
<evidence type="ECO:0000255" key="1">
    <source>
        <dbReference type="HAMAP-Rule" id="MF_00318"/>
    </source>
</evidence>
<organism>
    <name type="scientific">Escherichia coli O7:K1 (strain IAI39 / ExPEC)</name>
    <dbReference type="NCBI Taxonomy" id="585057"/>
    <lineage>
        <taxon>Bacteria</taxon>
        <taxon>Pseudomonadati</taxon>
        <taxon>Pseudomonadota</taxon>
        <taxon>Gammaproteobacteria</taxon>
        <taxon>Enterobacterales</taxon>
        <taxon>Enterobacteriaceae</taxon>
        <taxon>Escherichia</taxon>
    </lineage>
</organism>